<gene>
    <name evidence="1" type="primary">rplL</name>
    <name type="ordered locus">CLM_3957</name>
</gene>
<evidence type="ECO:0000255" key="1">
    <source>
        <dbReference type="HAMAP-Rule" id="MF_00368"/>
    </source>
</evidence>
<evidence type="ECO:0000305" key="2"/>
<reference key="1">
    <citation type="submission" date="2008-10" db="EMBL/GenBank/DDBJ databases">
        <title>Genome sequence of Clostridium botulinum A2 Kyoto.</title>
        <authorList>
            <person name="Shrivastava S."/>
            <person name="Brinkac L.M."/>
            <person name="Brown J.L."/>
            <person name="Bruce D."/>
            <person name="Detter C.C."/>
            <person name="Johnson E.A."/>
            <person name="Munk C.A."/>
            <person name="Smith L.A."/>
            <person name="Smith T.J."/>
            <person name="Sutton G."/>
            <person name="Brettin T.S."/>
        </authorList>
    </citation>
    <scope>NUCLEOTIDE SEQUENCE [LARGE SCALE GENOMIC DNA]</scope>
    <source>
        <strain>Kyoto / Type A2</strain>
    </source>
</reference>
<protein>
    <recommendedName>
        <fullName evidence="1">Large ribosomal subunit protein bL12</fullName>
    </recommendedName>
    <alternativeName>
        <fullName evidence="2">50S ribosomal protein L7/L12</fullName>
    </alternativeName>
</protein>
<keyword id="KW-0687">Ribonucleoprotein</keyword>
<keyword id="KW-0689">Ribosomal protein</keyword>
<organism>
    <name type="scientific">Clostridium botulinum (strain Kyoto / Type A2)</name>
    <dbReference type="NCBI Taxonomy" id="536232"/>
    <lineage>
        <taxon>Bacteria</taxon>
        <taxon>Bacillati</taxon>
        <taxon>Bacillota</taxon>
        <taxon>Clostridia</taxon>
        <taxon>Eubacteriales</taxon>
        <taxon>Clostridiaceae</taxon>
        <taxon>Clostridium</taxon>
    </lineage>
</organism>
<dbReference type="EMBL" id="CP001581">
    <property type="protein sequence ID" value="ACO87011.1"/>
    <property type="molecule type" value="Genomic_DNA"/>
</dbReference>
<dbReference type="RefSeq" id="WP_003357259.1">
    <property type="nucleotide sequence ID" value="NC_012563.1"/>
</dbReference>
<dbReference type="SMR" id="C1FMW0"/>
<dbReference type="GeneID" id="92940259"/>
<dbReference type="KEGG" id="cby:CLM_3957"/>
<dbReference type="eggNOG" id="COG0222">
    <property type="taxonomic scope" value="Bacteria"/>
</dbReference>
<dbReference type="HOGENOM" id="CLU_086499_3_2_9"/>
<dbReference type="Proteomes" id="UP000001374">
    <property type="component" value="Chromosome"/>
</dbReference>
<dbReference type="GO" id="GO:0022625">
    <property type="term" value="C:cytosolic large ribosomal subunit"/>
    <property type="evidence" value="ECO:0007669"/>
    <property type="project" value="TreeGrafter"/>
</dbReference>
<dbReference type="GO" id="GO:0003729">
    <property type="term" value="F:mRNA binding"/>
    <property type="evidence" value="ECO:0007669"/>
    <property type="project" value="TreeGrafter"/>
</dbReference>
<dbReference type="GO" id="GO:0003735">
    <property type="term" value="F:structural constituent of ribosome"/>
    <property type="evidence" value="ECO:0007669"/>
    <property type="project" value="InterPro"/>
</dbReference>
<dbReference type="GO" id="GO:0006412">
    <property type="term" value="P:translation"/>
    <property type="evidence" value="ECO:0007669"/>
    <property type="project" value="UniProtKB-UniRule"/>
</dbReference>
<dbReference type="CDD" id="cd00387">
    <property type="entry name" value="Ribosomal_L7_L12"/>
    <property type="match status" value="1"/>
</dbReference>
<dbReference type="FunFam" id="1.20.5.710:FF:000002">
    <property type="entry name" value="50S ribosomal protein L7/L12"/>
    <property type="match status" value="1"/>
</dbReference>
<dbReference type="FunFam" id="3.30.1390.10:FF:000001">
    <property type="entry name" value="50S ribosomal protein L7/L12"/>
    <property type="match status" value="1"/>
</dbReference>
<dbReference type="Gene3D" id="3.30.1390.10">
    <property type="match status" value="1"/>
</dbReference>
<dbReference type="Gene3D" id="1.20.5.710">
    <property type="entry name" value="Single helix bin"/>
    <property type="match status" value="1"/>
</dbReference>
<dbReference type="HAMAP" id="MF_00368">
    <property type="entry name" value="Ribosomal_bL12"/>
    <property type="match status" value="1"/>
</dbReference>
<dbReference type="InterPro" id="IPR000206">
    <property type="entry name" value="Ribosomal_bL12"/>
</dbReference>
<dbReference type="InterPro" id="IPR013823">
    <property type="entry name" value="Ribosomal_bL12_C"/>
</dbReference>
<dbReference type="InterPro" id="IPR014719">
    <property type="entry name" value="Ribosomal_bL12_C/ClpS-like"/>
</dbReference>
<dbReference type="InterPro" id="IPR008932">
    <property type="entry name" value="Ribosomal_bL12_oligo"/>
</dbReference>
<dbReference type="InterPro" id="IPR036235">
    <property type="entry name" value="Ribosomal_bL12_oligo_N_sf"/>
</dbReference>
<dbReference type="NCBIfam" id="TIGR00855">
    <property type="entry name" value="L12"/>
    <property type="match status" value="1"/>
</dbReference>
<dbReference type="PANTHER" id="PTHR45987">
    <property type="entry name" value="39S RIBOSOMAL PROTEIN L12"/>
    <property type="match status" value="1"/>
</dbReference>
<dbReference type="PANTHER" id="PTHR45987:SF4">
    <property type="entry name" value="LARGE RIBOSOMAL SUBUNIT PROTEIN BL12M"/>
    <property type="match status" value="1"/>
</dbReference>
<dbReference type="Pfam" id="PF00542">
    <property type="entry name" value="Ribosomal_L12"/>
    <property type="match status" value="1"/>
</dbReference>
<dbReference type="Pfam" id="PF16320">
    <property type="entry name" value="Ribosomal_L12_N"/>
    <property type="match status" value="1"/>
</dbReference>
<dbReference type="SUPFAM" id="SSF54736">
    <property type="entry name" value="ClpS-like"/>
    <property type="match status" value="1"/>
</dbReference>
<dbReference type="SUPFAM" id="SSF48300">
    <property type="entry name" value="Ribosomal protein L7/12, oligomerisation (N-terminal) domain"/>
    <property type="match status" value="1"/>
</dbReference>
<sequence length="123" mass="12663">MKKEEIIQAIKEMTVLELNELVEACEEEFGVSAAAPVAVAGAGAAAGAGAAEEKTEFDVVLADAGSEKIKVIKAVREVTGLGLKEAKALVDGAPKTLKEAASKEDGEAIKAKLEEVGAKVELK</sequence>
<accession>C1FMW0</accession>
<feature type="chain" id="PRO_1000195784" description="Large ribosomal subunit protein bL12">
    <location>
        <begin position="1"/>
        <end position="123"/>
    </location>
</feature>
<proteinExistence type="inferred from homology"/>
<name>RL7_CLOBJ</name>
<comment type="function">
    <text evidence="1">Forms part of the ribosomal stalk which helps the ribosome interact with GTP-bound translation factors. Is thus essential for accurate translation.</text>
</comment>
<comment type="subunit">
    <text evidence="1">Homodimer. Part of the ribosomal stalk of the 50S ribosomal subunit. Forms a multimeric L10(L12)X complex, where L10 forms an elongated spine to which 2 to 4 L12 dimers bind in a sequential fashion. Binds GTP-bound translation factors.</text>
</comment>
<comment type="similarity">
    <text evidence="1">Belongs to the bacterial ribosomal protein bL12 family.</text>
</comment>